<name>LPTN_PROVU</name>
<gene>
    <name type="primary">tnaL</name>
    <name type="synonym">tnaC</name>
</gene>
<accession>P28779</accession>
<dbReference type="EMBL" id="M93277">
    <property type="protein sequence ID" value="AAA25663.1"/>
    <property type="molecule type" value="Genomic_DNA"/>
</dbReference>
<dbReference type="PIR" id="A44038">
    <property type="entry name" value="A44038"/>
</dbReference>
<dbReference type="GO" id="GO:0031556">
    <property type="term" value="P:transcriptional attenuation by ribosome"/>
    <property type="evidence" value="ECO:0007669"/>
    <property type="project" value="InterPro"/>
</dbReference>
<dbReference type="InterPro" id="IPR012620">
    <property type="entry name" value="Trp_operon_leader_peptide"/>
</dbReference>
<dbReference type="NCBIfam" id="TIGR02616">
    <property type="entry name" value="tnaC_leader"/>
    <property type="match status" value="1"/>
</dbReference>
<proteinExistence type="predicted"/>
<protein>
    <recommendedName>
        <fullName>Tryptophanase operon leader peptide</fullName>
    </recommendedName>
</protein>
<keyword id="KW-0428">Leader peptide</keyword>
<reference key="1">
    <citation type="journal article" date="1992" name="J. Biol. Chem.">
        <title>Characterization of the tryptophanase operon of Proteus vulgaris. Cloning, nucleotide sequence, amino acid homology, and in vitro synthesis of the leader peptide and regulatory analysis.</title>
        <authorList>
            <person name="Kamath A.V."/>
            <person name="Yanofsky C."/>
        </authorList>
    </citation>
    <scope>NUCLEOTIDE SEQUENCE [GENOMIC DNA]</scope>
</reference>
<sequence length="34" mass="4140">MFSSFNVLIILRGFVRLKKWFNIDSELAFFFPKK</sequence>
<feature type="peptide" id="PRO_0000044767" description="Tryptophanase operon leader peptide">
    <location>
        <begin position="1"/>
        <end position="34"/>
    </location>
</feature>
<organism>
    <name type="scientific">Proteus vulgaris</name>
    <dbReference type="NCBI Taxonomy" id="585"/>
    <lineage>
        <taxon>Bacteria</taxon>
        <taxon>Pseudomonadati</taxon>
        <taxon>Pseudomonadota</taxon>
        <taxon>Gammaproteobacteria</taxon>
        <taxon>Enterobacterales</taxon>
        <taxon>Morganellaceae</taxon>
        <taxon>Proteus</taxon>
    </lineage>
</organism>